<organism>
    <name type="scientific">Shewanella sp. (strain ANA-3)</name>
    <dbReference type="NCBI Taxonomy" id="94122"/>
    <lineage>
        <taxon>Bacteria</taxon>
        <taxon>Pseudomonadati</taxon>
        <taxon>Pseudomonadota</taxon>
        <taxon>Gammaproteobacteria</taxon>
        <taxon>Alteromonadales</taxon>
        <taxon>Shewanellaceae</taxon>
        <taxon>Shewanella</taxon>
    </lineage>
</organism>
<reference key="1">
    <citation type="submission" date="2006-09" db="EMBL/GenBank/DDBJ databases">
        <title>Complete sequence of chromosome 1 of Shewanella sp. ANA-3.</title>
        <authorList>
            <person name="Copeland A."/>
            <person name="Lucas S."/>
            <person name="Lapidus A."/>
            <person name="Barry K."/>
            <person name="Detter J.C."/>
            <person name="Glavina del Rio T."/>
            <person name="Hammon N."/>
            <person name="Israni S."/>
            <person name="Dalin E."/>
            <person name="Tice H."/>
            <person name="Pitluck S."/>
            <person name="Chertkov O."/>
            <person name="Brettin T."/>
            <person name="Bruce D."/>
            <person name="Han C."/>
            <person name="Tapia R."/>
            <person name="Gilna P."/>
            <person name="Schmutz J."/>
            <person name="Larimer F."/>
            <person name="Land M."/>
            <person name="Hauser L."/>
            <person name="Kyrpides N."/>
            <person name="Kim E."/>
            <person name="Newman D."/>
            <person name="Salticov C."/>
            <person name="Konstantinidis K."/>
            <person name="Klappenback J."/>
            <person name="Tiedje J."/>
            <person name="Richardson P."/>
        </authorList>
    </citation>
    <scope>NUCLEOTIDE SEQUENCE [LARGE SCALE GENOMIC DNA]</scope>
    <source>
        <strain>ANA-3</strain>
    </source>
</reference>
<proteinExistence type="inferred from homology"/>
<protein>
    <recommendedName>
        <fullName evidence="1">Uracil phosphoribosyltransferase</fullName>
        <ecNumber evidence="1">2.4.2.9</ecNumber>
    </recommendedName>
    <alternativeName>
        <fullName evidence="1">UMP pyrophosphorylase</fullName>
    </alternativeName>
    <alternativeName>
        <fullName evidence="1">UPRTase</fullName>
    </alternativeName>
</protein>
<dbReference type="EC" id="2.4.2.9" evidence="1"/>
<dbReference type="EMBL" id="CP000469">
    <property type="protein sequence ID" value="ABK48771.1"/>
    <property type="molecule type" value="Genomic_DNA"/>
</dbReference>
<dbReference type="RefSeq" id="WP_011717453.1">
    <property type="nucleotide sequence ID" value="NC_008577.1"/>
</dbReference>
<dbReference type="SMR" id="A0KYA2"/>
<dbReference type="STRING" id="94122.Shewana3_2544"/>
<dbReference type="GeneID" id="94728489"/>
<dbReference type="KEGG" id="shn:Shewana3_2544"/>
<dbReference type="eggNOG" id="COG0035">
    <property type="taxonomic scope" value="Bacteria"/>
</dbReference>
<dbReference type="HOGENOM" id="CLU_067096_2_2_6"/>
<dbReference type="OrthoDB" id="9781675at2"/>
<dbReference type="UniPathway" id="UPA00574">
    <property type="reaction ID" value="UER00636"/>
</dbReference>
<dbReference type="Proteomes" id="UP000002589">
    <property type="component" value="Chromosome"/>
</dbReference>
<dbReference type="GO" id="GO:0005525">
    <property type="term" value="F:GTP binding"/>
    <property type="evidence" value="ECO:0007669"/>
    <property type="project" value="UniProtKB-KW"/>
</dbReference>
<dbReference type="GO" id="GO:0000287">
    <property type="term" value="F:magnesium ion binding"/>
    <property type="evidence" value="ECO:0007669"/>
    <property type="project" value="UniProtKB-UniRule"/>
</dbReference>
<dbReference type="GO" id="GO:0004845">
    <property type="term" value="F:uracil phosphoribosyltransferase activity"/>
    <property type="evidence" value="ECO:0007669"/>
    <property type="project" value="UniProtKB-UniRule"/>
</dbReference>
<dbReference type="GO" id="GO:0044206">
    <property type="term" value="P:UMP salvage"/>
    <property type="evidence" value="ECO:0007669"/>
    <property type="project" value="UniProtKB-UniRule"/>
</dbReference>
<dbReference type="GO" id="GO:0006223">
    <property type="term" value="P:uracil salvage"/>
    <property type="evidence" value="ECO:0007669"/>
    <property type="project" value="InterPro"/>
</dbReference>
<dbReference type="CDD" id="cd06223">
    <property type="entry name" value="PRTases_typeI"/>
    <property type="match status" value="1"/>
</dbReference>
<dbReference type="FunFam" id="3.40.50.2020:FF:000003">
    <property type="entry name" value="Uracil phosphoribosyltransferase"/>
    <property type="match status" value="1"/>
</dbReference>
<dbReference type="Gene3D" id="3.40.50.2020">
    <property type="match status" value="1"/>
</dbReference>
<dbReference type="HAMAP" id="MF_01218_B">
    <property type="entry name" value="Upp_B"/>
    <property type="match status" value="1"/>
</dbReference>
<dbReference type="InterPro" id="IPR000836">
    <property type="entry name" value="PRibTrfase_dom"/>
</dbReference>
<dbReference type="InterPro" id="IPR029057">
    <property type="entry name" value="PRTase-like"/>
</dbReference>
<dbReference type="InterPro" id="IPR034332">
    <property type="entry name" value="Upp_B"/>
</dbReference>
<dbReference type="InterPro" id="IPR050054">
    <property type="entry name" value="UPRTase/APRTase"/>
</dbReference>
<dbReference type="InterPro" id="IPR005765">
    <property type="entry name" value="Ura_phspho_trans"/>
</dbReference>
<dbReference type="NCBIfam" id="NF001097">
    <property type="entry name" value="PRK00129.1"/>
    <property type="match status" value="1"/>
</dbReference>
<dbReference type="NCBIfam" id="TIGR01091">
    <property type="entry name" value="upp"/>
    <property type="match status" value="1"/>
</dbReference>
<dbReference type="PANTHER" id="PTHR32315">
    <property type="entry name" value="ADENINE PHOSPHORIBOSYLTRANSFERASE"/>
    <property type="match status" value="1"/>
</dbReference>
<dbReference type="PANTHER" id="PTHR32315:SF4">
    <property type="entry name" value="URACIL PHOSPHORIBOSYLTRANSFERASE, CHLOROPLASTIC"/>
    <property type="match status" value="1"/>
</dbReference>
<dbReference type="Pfam" id="PF14681">
    <property type="entry name" value="UPRTase"/>
    <property type="match status" value="1"/>
</dbReference>
<dbReference type="SUPFAM" id="SSF53271">
    <property type="entry name" value="PRTase-like"/>
    <property type="match status" value="1"/>
</dbReference>
<evidence type="ECO:0000255" key="1">
    <source>
        <dbReference type="HAMAP-Rule" id="MF_01218"/>
    </source>
</evidence>
<gene>
    <name evidence="1" type="primary">upp</name>
    <name type="ordered locus">Shewana3_2544</name>
</gene>
<keyword id="KW-0021">Allosteric enzyme</keyword>
<keyword id="KW-0328">Glycosyltransferase</keyword>
<keyword id="KW-0342">GTP-binding</keyword>
<keyword id="KW-0460">Magnesium</keyword>
<keyword id="KW-0547">Nucleotide-binding</keyword>
<keyword id="KW-0808">Transferase</keyword>
<accession>A0KYA2</accession>
<sequence length="208" mass="22584">MKVVEVKHPLVRHKIGLMREGDISTKRFRELAAEVGSLLTYEATADFETETVTIEGWNGPVEVDQIKGKKVTVVPILRAGLGMMDGVLEHIPSARISVVGIYRDEETLEPVPYFEKLASDMNERIALIVDPMLATGGSMIATIDLLKKRGCTSIKALVLVAAPEGIKALEAAHPDVELYTAAIDRCLNEKGYILPGLGDAGDKIFGTK</sequence>
<name>UPP_SHESA</name>
<comment type="function">
    <text evidence="1">Catalyzes the conversion of uracil and 5-phospho-alpha-D-ribose 1-diphosphate (PRPP) to UMP and diphosphate.</text>
</comment>
<comment type="catalytic activity">
    <reaction evidence="1">
        <text>UMP + diphosphate = 5-phospho-alpha-D-ribose 1-diphosphate + uracil</text>
        <dbReference type="Rhea" id="RHEA:13017"/>
        <dbReference type="ChEBI" id="CHEBI:17568"/>
        <dbReference type="ChEBI" id="CHEBI:33019"/>
        <dbReference type="ChEBI" id="CHEBI:57865"/>
        <dbReference type="ChEBI" id="CHEBI:58017"/>
        <dbReference type="EC" id="2.4.2.9"/>
    </reaction>
</comment>
<comment type="cofactor">
    <cofactor evidence="1">
        <name>Mg(2+)</name>
        <dbReference type="ChEBI" id="CHEBI:18420"/>
    </cofactor>
    <text evidence="1">Binds 1 Mg(2+) ion per subunit. The magnesium is bound as Mg-PRPP.</text>
</comment>
<comment type="activity regulation">
    <text evidence="1">Allosterically activated by GTP.</text>
</comment>
<comment type="pathway">
    <text evidence="1">Pyrimidine metabolism; UMP biosynthesis via salvage pathway; UMP from uracil: step 1/1.</text>
</comment>
<comment type="similarity">
    <text evidence="1">Belongs to the UPRTase family.</text>
</comment>
<feature type="chain" id="PRO_1000053783" description="Uracil phosphoribosyltransferase">
    <location>
        <begin position="1"/>
        <end position="208"/>
    </location>
</feature>
<feature type="binding site" evidence="1">
    <location>
        <position position="78"/>
    </location>
    <ligand>
        <name>5-phospho-alpha-D-ribose 1-diphosphate</name>
        <dbReference type="ChEBI" id="CHEBI:58017"/>
    </ligand>
</feature>
<feature type="binding site" evidence="1">
    <location>
        <position position="103"/>
    </location>
    <ligand>
        <name>5-phospho-alpha-D-ribose 1-diphosphate</name>
        <dbReference type="ChEBI" id="CHEBI:58017"/>
    </ligand>
</feature>
<feature type="binding site" evidence="1">
    <location>
        <begin position="130"/>
        <end position="138"/>
    </location>
    <ligand>
        <name>5-phospho-alpha-D-ribose 1-diphosphate</name>
        <dbReference type="ChEBI" id="CHEBI:58017"/>
    </ligand>
</feature>
<feature type="binding site" evidence="1">
    <location>
        <position position="193"/>
    </location>
    <ligand>
        <name>uracil</name>
        <dbReference type="ChEBI" id="CHEBI:17568"/>
    </ligand>
</feature>
<feature type="binding site" evidence="1">
    <location>
        <begin position="198"/>
        <end position="200"/>
    </location>
    <ligand>
        <name>uracil</name>
        <dbReference type="ChEBI" id="CHEBI:17568"/>
    </ligand>
</feature>
<feature type="binding site" evidence="1">
    <location>
        <position position="199"/>
    </location>
    <ligand>
        <name>5-phospho-alpha-D-ribose 1-diphosphate</name>
        <dbReference type="ChEBI" id="CHEBI:58017"/>
    </ligand>
</feature>